<protein>
    <recommendedName>
        <fullName evidence="1">Large ribosomal subunit protein bL21</fullName>
    </recommendedName>
    <alternativeName>
        <fullName evidence="2">50S ribosomal protein L21</fullName>
    </alternativeName>
</protein>
<organism>
    <name type="scientific">Histophilus somni (strain 2336)</name>
    <name type="common">Haemophilus somnus</name>
    <dbReference type="NCBI Taxonomy" id="228400"/>
    <lineage>
        <taxon>Bacteria</taxon>
        <taxon>Pseudomonadati</taxon>
        <taxon>Pseudomonadota</taxon>
        <taxon>Gammaproteobacteria</taxon>
        <taxon>Pasteurellales</taxon>
        <taxon>Pasteurellaceae</taxon>
        <taxon>Histophilus</taxon>
    </lineage>
</organism>
<accession>B0UVH9</accession>
<feature type="chain" id="PRO_1000086984" description="Large ribosomal subunit protein bL21">
    <location>
        <begin position="1"/>
        <end position="103"/>
    </location>
</feature>
<proteinExistence type="inferred from homology"/>
<gene>
    <name evidence="1" type="primary">rplU</name>
    <name type="ordered locus">HSM_0118</name>
</gene>
<evidence type="ECO:0000255" key="1">
    <source>
        <dbReference type="HAMAP-Rule" id="MF_01363"/>
    </source>
</evidence>
<evidence type="ECO:0000305" key="2"/>
<comment type="function">
    <text evidence="1">This protein binds to 23S rRNA in the presence of protein L20.</text>
</comment>
<comment type="subunit">
    <text evidence="1">Part of the 50S ribosomal subunit. Contacts protein L20.</text>
</comment>
<comment type="similarity">
    <text evidence="1">Belongs to the bacterial ribosomal protein bL21 family.</text>
</comment>
<dbReference type="EMBL" id="CP000947">
    <property type="protein sequence ID" value="ACA30903.1"/>
    <property type="molecule type" value="Genomic_DNA"/>
</dbReference>
<dbReference type="RefSeq" id="WP_011608399.1">
    <property type="nucleotide sequence ID" value="NC_010519.1"/>
</dbReference>
<dbReference type="SMR" id="B0UVH9"/>
<dbReference type="STRING" id="228400.HSM_0118"/>
<dbReference type="GeneID" id="31486393"/>
<dbReference type="KEGG" id="hsm:HSM_0118"/>
<dbReference type="HOGENOM" id="CLU_061463_3_2_6"/>
<dbReference type="GO" id="GO:0005737">
    <property type="term" value="C:cytoplasm"/>
    <property type="evidence" value="ECO:0007669"/>
    <property type="project" value="UniProtKB-ARBA"/>
</dbReference>
<dbReference type="GO" id="GO:1990904">
    <property type="term" value="C:ribonucleoprotein complex"/>
    <property type="evidence" value="ECO:0007669"/>
    <property type="project" value="UniProtKB-KW"/>
</dbReference>
<dbReference type="GO" id="GO:0005840">
    <property type="term" value="C:ribosome"/>
    <property type="evidence" value="ECO:0007669"/>
    <property type="project" value="UniProtKB-KW"/>
</dbReference>
<dbReference type="GO" id="GO:0019843">
    <property type="term" value="F:rRNA binding"/>
    <property type="evidence" value="ECO:0007669"/>
    <property type="project" value="UniProtKB-UniRule"/>
</dbReference>
<dbReference type="GO" id="GO:0003735">
    <property type="term" value="F:structural constituent of ribosome"/>
    <property type="evidence" value="ECO:0007669"/>
    <property type="project" value="InterPro"/>
</dbReference>
<dbReference type="GO" id="GO:0006412">
    <property type="term" value="P:translation"/>
    <property type="evidence" value="ECO:0007669"/>
    <property type="project" value="UniProtKB-UniRule"/>
</dbReference>
<dbReference type="HAMAP" id="MF_01363">
    <property type="entry name" value="Ribosomal_bL21"/>
    <property type="match status" value="1"/>
</dbReference>
<dbReference type="InterPro" id="IPR028909">
    <property type="entry name" value="bL21-like"/>
</dbReference>
<dbReference type="InterPro" id="IPR036164">
    <property type="entry name" value="bL21-like_sf"/>
</dbReference>
<dbReference type="InterPro" id="IPR001787">
    <property type="entry name" value="Ribosomal_bL21"/>
</dbReference>
<dbReference type="InterPro" id="IPR018258">
    <property type="entry name" value="Ribosomal_bL21_CS"/>
</dbReference>
<dbReference type="NCBIfam" id="TIGR00061">
    <property type="entry name" value="L21"/>
    <property type="match status" value="1"/>
</dbReference>
<dbReference type="PANTHER" id="PTHR21349">
    <property type="entry name" value="50S RIBOSOMAL PROTEIN L21"/>
    <property type="match status" value="1"/>
</dbReference>
<dbReference type="PANTHER" id="PTHR21349:SF0">
    <property type="entry name" value="LARGE RIBOSOMAL SUBUNIT PROTEIN BL21M"/>
    <property type="match status" value="1"/>
</dbReference>
<dbReference type="Pfam" id="PF00829">
    <property type="entry name" value="Ribosomal_L21p"/>
    <property type="match status" value="1"/>
</dbReference>
<dbReference type="SUPFAM" id="SSF141091">
    <property type="entry name" value="L21p-like"/>
    <property type="match status" value="1"/>
</dbReference>
<dbReference type="PROSITE" id="PS01169">
    <property type="entry name" value="RIBOSOMAL_L21"/>
    <property type="match status" value="1"/>
</dbReference>
<reference key="1">
    <citation type="submission" date="2008-02" db="EMBL/GenBank/DDBJ databases">
        <title>Complete sequence of Haemophilus somnus 2336.</title>
        <authorList>
            <consortium name="US DOE Joint Genome Institute"/>
            <person name="Siddaramappa S."/>
            <person name="Duncan A.J."/>
            <person name="Challacombe J.F."/>
            <person name="Rainey D."/>
            <person name="Gillaspy A.F."/>
            <person name="Carson M."/>
            <person name="Gipson J."/>
            <person name="Gipson M."/>
            <person name="Bruce D."/>
            <person name="Detter J.C."/>
            <person name="Han C.S."/>
            <person name="Land M."/>
            <person name="Tapia R."/>
            <person name="Thompson L.S."/>
            <person name="Orvis J."/>
            <person name="Zaitshik J."/>
            <person name="Barnes G."/>
            <person name="Brettin T.S."/>
            <person name="Dyer D.W."/>
            <person name="Inzana T.J."/>
        </authorList>
    </citation>
    <scope>NUCLEOTIDE SEQUENCE [LARGE SCALE GENOMIC DNA]</scope>
    <source>
        <strain>2336</strain>
    </source>
</reference>
<sequence>MYAVFQSGGKQHRVSEGHVVRLEKLELATGSTVEFDSVLMIVNGEDIKIGTPVVTGAKVVAEVVSQGRGEKVKIVKFRRRKHSRKQQGHRQWFTEVKITGIQA</sequence>
<name>RL21_HISS2</name>
<keyword id="KW-0687">Ribonucleoprotein</keyword>
<keyword id="KW-0689">Ribosomal protein</keyword>
<keyword id="KW-0694">RNA-binding</keyword>
<keyword id="KW-0699">rRNA-binding</keyword>